<evidence type="ECO:0000255" key="1">
    <source>
        <dbReference type="HAMAP-Rule" id="MF_01389"/>
    </source>
</evidence>
<name>UREG_HELP2</name>
<organism>
    <name type="scientific">Helicobacter pylori (strain P12)</name>
    <dbReference type="NCBI Taxonomy" id="570508"/>
    <lineage>
        <taxon>Bacteria</taxon>
        <taxon>Pseudomonadati</taxon>
        <taxon>Campylobacterota</taxon>
        <taxon>Epsilonproteobacteria</taxon>
        <taxon>Campylobacterales</taxon>
        <taxon>Helicobacteraceae</taxon>
        <taxon>Helicobacter</taxon>
    </lineage>
</organism>
<keyword id="KW-0143">Chaperone</keyword>
<keyword id="KW-0963">Cytoplasm</keyword>
<keyword id="KW-0342">GTP-binding</keyword>
<keyword id="KW-0996">Nickel insertion</keyword>
<keyword id="KW-0547">Nucleotide-binding</keyword>
<comment type="function">
    <text evidence="1">Facilitates the functional incorporation of the urease nickel metallocenter. This process requires GTP hydrolysis, probably effectuated by UreG.</text>
</comment>
<comment type="subunit">
    <text evidence="1">Homodimer. UreH, UreF and UreG form a complex that acts as a GTP-hydrolysis-dependent molecular chaperone, activating the urease apoprotein by helping to assemble the nickel containing metallocenter of UreC. The UreE protein probably delivers the nickel.</text>
</comment>
<comment type="subcellular location">
    <subcellularLocation>
        <location evidence="1">Cytoplasm</location>
    </subcellularLocation>
</comment>
<comment type="similarity">
    <text evidence="1">Belongs to the SIMIBI class G3E GTPase family. UreG subfamily.</text>
</comment>
<reference key="1">
    <citation type="submission" date="2008-10" db="EMBL/GenBank/DDBJ databases">
        <title>The complete genome sequence of Helicobacter pylori strain P12.</title>
        <authorList>
            <person name="Fischer W."/>
            <person name="Windhager L."/>
            <person name="Karnholz A."/>
            <person name="Zeiller M."/>
            <person name="Zimmer R."/>
            <person name="Haas R."/>
        </authorList>
    </citation>
    <scope>NUCLEOTIDE SEQUENCE [LARGE SCALE GENOMIC DNA]</scope>
    <source>
        <strain>P12</strain>
    </source>
</reference>
<feature type="chain" id="PRO_1000145178" description="Urease accessory protein UreG">
    <location>
        <begin position="1"/>
        <end position="199"/>
    </location>
</feature>
<feature type="binding site" evidence="1">
    <location>
        <begin position="8"/>
        <end position="15"/>
    </location>
    <ligand>
        <name>GTP</name>
        <dbReference type="ChEBI" id="CHEBI:37565"/>
    </ligand>
</feature>
<sequence>MVKIGVCGPVGSGKTALIEALTRHMSKDYDMAVITNDIYTKEDAEFMCKNSVMPRERIIGVETGGCPHTAIREDASMNLEAVEEMHDRFPNLELLLIESGGDNLSATFNPELADFTIFVIDVAEGDKIPRKGGPGITRSDLLVINKIDLAPYVGADLKVMERDSKKMRGEKPFIFTNIRAKEGLDDVIAWIKRNALLED</sequence>
<accession>B6JPH1</accession>
<dbReference type="EMBL" id="CP001217">
    <property type="protein sequence ID" value="ACJ07232.1"/>
    <property type="molecule type" value="Genomic_DNA"/>
</dbReference>
<dbReference type="SMR" id="B6JPH1"/>
<dbReference type="KEGG" id="hpp:HPP12_0072"/>
<dbReference type="HOGENOM" id="CLU_072144_1_0_7"/>
<dbReference type="Proteomes" id="UP000008198">
    <property type="component" value="Chromosome"/>
</dbReference>
<dbReference type="GO" id="GO:0005737">
    <property type="term" value="C:cytoplasm"/>
    <property type="evidence" value="ECO:0007669"/>
    <property type="project" value="UniProtKB-SubCell"/>
</dbReference>
<dbReference type="GO" id="GO:0005525">
    <property type="term" value="F:GTP binding"/>
    <property type="evidence" value="ECO:0007669"/>
    <property type="project" value="UniProtKB-KW"/>
</dbReference>
<dbReference type="GO" id="GO:0003924">
    <property type="term" value="F:GTPase activity"/>
    <property type="evidence" value="ECO:0007669"/>
    <property type="project" value="InterPro"/>
</dbReference>
<dbReference type="GO" id="GO:0016151">
    <property type="term" value="F:nickel cation binding"/>
    <property type="evidence" value="ECO:0007669"/>
    <property type="project" value="InterPro"/>
</dbReference>
<dbReference type="GO" id="GO:0043419">
    <property type="term" value="P:urea catabolic process"/>
    <property type="evidence" value="ECO:0007669"/>
    <property type="project" value="InterPro"/>
</dbReference>
<dbReference type="CDD" id="cd05540">
    <property type="entry name" value="UreG"/>
    <property type="match status" value="1"/>
</dbReference>
<dbReference type="FunFam" id="3.40.50.300:FF:000208">
    <property type="entry name" value="Urease accessory protein UreG"/>
    <property type="match status" value="1"/>
</dbReference>
<dbReference type="Gene3D" id="3.40.50.300">
    <property type="entry name" value="P-loop containing nucleotide triphosphate hydrolases"/>
    <property type="match status" value="1"/>
</dbReference>
<dbReference type="HAMAP" id="MF_01389">
    <property type="entry name" value="UreG"/>
    <property type="match status" value="1"/>
</dbReference>
<dbReference type="InterPro" id="IPR003495">
    <property type="entry name" value="CobW/HypB/UreG_nucleotide-bd"/>
</dbReference>
<dbReference type="InterPro" id="IPR027417">
    <property type="entry name" value="P-loop_NTPase"/>
</dbReference>
<dbReference type="InterPro" id="IPR004400">
    <property type="entry name" value="UreG"/>
</dbReference>
<dbReference type="NCBIfam" id="TIGR00101">
    <property type="entry name" value="ureG"/>
    <property type="match status" value="1"/>
</dbReference>
<dbReference type="PANTHER" id="PTHR31715">
    <property type="entry name" value="UREASE ACCESSORY PROTEIN G"/>
    <property type="match status" value="1"/>
</dbReference>
<dbReference type="PANTHER" id="PTHR31715:SF0">
    <property type="entry name" value="UREASE ACCESSORY PROTEIN G"/>
    <property type="match status" value="1"/>
</dbReference>
<dbReference type="Pfam" id="PF02492">
    <property type="entry name" value="cobW"/>
    <property type="match status" value="1"/>
</dbReference>
<dbReference type="PIRSF" id="PIRSF005624">
    <property type="entry name" value="Ni-bind_GTPase"/>
    <property type="match status" value="1"/>
</dbReference>
<dbReference type="SUPFAM" id="SSF52540">
    <property type="entry name" value="P-loop containing nucleoside triphosphate hydrolases"/>
    <property type="match status" value="1"/>
</dbReference>
<protein>
    <recommendedName>
        <fullName evidence="1">Urease accessory protein UreG</fullName>
    </recommendedName>
</protein>
<gene>
    <name evidence="1" type="primary">ureG</name>
    <name type="ordered locus">HPP12_0072</name>
</gene>
<proteinExistence type="inferred from homology"/>